<proteinExistence type="inferred from homology"/>
<comment type="function">
    <text evidence="1">Part of a membrane-bound complex that couples electron transfer with translocation of ions across the membrane.</text>
</comment>
<comment type="cofactor">
    <cofactor evidence="1">
        <name>FMN</name>
        <dbReference type="ChEBI" id="CHEBI:58210"/>
    </cofactor>
</comment>
<comment type="subunit">
    <text evidence="1">The complex is composed of six subunits: RnfA, RnfB, RnfC, RnfD, RnfE and RnfG.</text>
</comment>
<comment type="subcellular location">
    <subcellularLocation>
        <location evidence="1">Cell inner membrane</location>
        <topology evidence="1">Single-pass membrane protein</topology>
    </subcellularLocation>
</comment>
<comment type="similarity">
    <text evidence="1">Belongs to the RnfG family.</text>
</comment>
<accession>Q8EE77</accession>
<dbReference type="EC" id="7.-.-.-" evidence="1"/>
<dbReference type="EMBL" id="AE014299">
    <property type="protein sequence ID" value="AAN55543.1"/>
    <property type="molecule type" value="Genomic_DNA"/>
</dbReference>
<dbReference type="RefSeq" id="NP_718099.1">
    <property type="nucleotide sequence ID" value="NC_004347.2"/>
</dbReference>
<dbReference type="RefSeq" id="WP_011072475.1">
    <property type="nucleotide sequence ID" value="NC_004347.2"/>
</dbReference>
<dbReference type="SMR" id="Q8EE77"/>
<dbReference type="STRING" id="211586.SO_2512"/>
<dbReference type="PaxDb" id="211586-SO_2512"/>
<dbReference type="DNASU" id="1170223"/>
<dbReference type="KEGG" id="son:SO_2512"/>
<dbReference type="PATRIC" id="fig|211586.12.peg.2418"/>
<dbReference type="eggNOG" id="COG4659">
    <property type="taxonomic scope" value="Bacteria"/>
</dbReference>
<dbReference type="HOGENOM" id="CLU_077882_1_0_6"/>
<dbReference type="OrthoDB" id="9784165at2"/>
<dbReference type="PhylomeDB" id="Q8EE77"/>
<dbReference type="BioCyc" id="SONE211586:G1GMP-2303-MONOMER"/>
<dbReference type="Proteomes" id="UP000008186">
    <property type="component" value="Chromosome"/>
</dbReference>
<dbReference type="GO" id="GO:1990204">
    <property type="term" value="C:oxidoreductase complex"/>
    <property type="evidence" value="ECO:0000318"/>
    <property type="project" value="GO_Central"/>
</dbReference>
<dbReference type="GO" id="GO:0005886">
    <property type="term" value="C:plasma membrane"/>
    <property type="evidence" value="ECO:0000318"/>
    <property type="project" value="GO_Central"/>
</dbReference>
<dbReference type="GO" id="GO:0009055">
    <property type="term" value="F:electron transfer activity"/>
    <property type="evidence" value="ECO:0007669"/>
    <property type="project" value="InterPro"/>
</dbReference>
<dbReference type="GO" id="GO:0010181">
    <property type="term" value="F:FMN binding"/>
    <property type="evidence" value="ECO:0007669"/>
    <property type="project" value="InterPro"/>
</dbReference>
<dbReference type="GO" id="GO:0016651">
    <property type="term" value="F:oxidoreductase activity, acting on NAD(P)H"/>
    <property type="evidence" value="ECO:0000318"/>
    <property type="project" value="GO_Central"/>
</dbReference>
<dbReference type="GO" id="GO:0022900">
    <property type="term" value="P:electron transport chain"/>
    <property type="evidence" value="ECO:0007669"/>
    <property type="project" value="UniProtKB-UniRule"/>
</dbReference>
<dbReference type="HAMAP" id="MF_00479">
    <property type="entry name" value="RsxG_RnfG"/>
    <property type="match status" value="1"/>
</dbReference>
<dbReference type="InterPro" id="IPR007329">
    <property type="entry name" value="FMN-bd"/>
</dbReference>
<dbReference type="InterPro" id="IPR010209">
    <property type="entry name" value="Ion_transpt_RnfG/RsxG"/>
</dbReference>
<dbReference type="NCBIfam" id="NF002519">
    <property type="entry name" value="PRK01908.1"/>
    <property type="match status" value="1"/>
</dbReference>
<dbReference type="NCBIfam" id="TIGR01947">
    <property type="entry name" value="rnfG"/>
    <property type="match status" value="1"/>
</dbReference>
<dbReference type="PANTHER" id="PTHR36118">
    <property type="entry name" value="ION-TRANSLOCATING OXIDOREDUCTASE COMPLEX SUBUNIT G"/>
    <property type="match status" value="1"/>
</dbReference>
<dbReference type="PANTHER" id="PTHR36118:SF1">
    <property type="entry name" value="ION-TRANSLOCATING OXIDOREDUCTASE COMPLEX SUBUNIT G"/>
    <property type="match status" value="1"/>
</dbReference>
<dbReference type="Pfam" id="PF04205">
    <property type="entry name" value="FMN_bind"/>
    <property type="match status" value="1"/>
</dbReference>
<dbReference type="PIRSF" id="PIRSF006091">
    <property type="entry name" value="E_trnsport_RnfG"/>
    <property type="match status" value="1"/>
</dbReference>
<dbReference type="SMART" id="SM00900">
    <property type="entry name" value="FMN_bind"/>
    <property type="match status" value="1"/>
</dbReference>
<gene>
    <name evidence="1" type="primary">rnfG</name>
    <name type="ordered locus">SO_2512</name>
</gene>
<organism>
    <name type="scientific">Shewanella oneidensis (strain ATCC 700550 / JCM 31522 / CIP 106686 / LMG 19005 / NCIMB 14063 / MR-1)</name>
    <dbReference type="NCBI Taxonomy" id="211586"/>
    <lineage>
        <taxon>Bacteria</taxon>
        <taxon>Pseudomonadati</taxon>
        <taxon>Pseudomonadota</taxon>
        <taxon>Gammaproteobacteria</taxon>
        <taxon>Alteromonadales</taxon>
        <taxon>Shewanellaceae</taxon>
        <taxon>Shewanella</taxon>
    </lineage>
</organism>
<keyword id="KW-0997">Cell inner membrane</keyword>
<keyword id="KW-1003">Cell membrane</keyword>
<keyword id="KW-0249">Electron transport</keyword>
<keyword id="KW-0285">Flavoprotein</keyword>
<keyword id="KW-0288">FMN</keyword>
<keyword id="KW-0472">Membrane</keyword>
<keyword id="KW-0597">Phosphoprotein</keyword>
<keyword id="KW-1185">Reference proteome</keyword>
<keyword id="KW-1278">Translocase</keyword>
<keyword id="KW-0812">Transmembrane</keyword>
<keyword id="KW-1133">Transmembrane helix</keyword>
<keyword id="KW-0813">Transport</keyword>
<protein>
    <recommendedName>
        <fullName evidence="1">Ion-translocating oxidoreductase complex subunit G</fullName>
        <ecNumber evidence="1">7.-.-.-</ecNumber>
    </recommendedName>
    <alternativeName>
        <fullName evidence="1">Rnf electron transport complex subunit G</fullName>
    </alternativeName>
</protein>
<reference key="1">
    <citation type="journal article" date="2002" name="Nat. Biotechnol.">
        <title>Genome sequence of the dissimilatory metal ion-reducing bacterium Shewanella oneidensis.</title>
        <authorList>
            <person name="Heidelberg J.F."/>
            <person name="Paulsen I.T."/>
            <person name="Nelson K.E."/>
            <person name="Gaidos E.J."/>
            <person name="Nelson W.C."/>
            <person name="Read T.D."/>
            <person name="Eisen J.A."/>
            <person name="Seshadri R."/>
            <person name="Ward N.L."/>
            <person name="Methe B.A."/>
            <person name="Clayton R.A."/>
            <person name="Meyer T."/>
            <person name="Tsapin A."/>
            <person name="Scott J."/>
            <person name="Beanan M.J."/>
            <person name="Brinkac L.M."/>
            <person name="Daugherty S.C."/>
            <person name="DeBoy R.T."/>
            <person name="Dodson R.J."/>
            <person name="Durkin A.S."/>
            <person name="Haft D.H."/>
            <person name="Kolonay J.F."/>
            <person name="Madupu R."/>
            <person name="Peterson J.D."/>
            <person name="Umayam L.A."/>
            <person name="White O."/>
            <person name="Wolf A.M."/>
            <person name="Vamathevan J.J."/>
            <person name="Weidman J.F."/>
            <person name="Impraim M."/>
            <person name="Lee K."/>
            <person name="Berry K.J."/>
            <person name="Lee C."/>
            <person name="Mueller J."/>
            <person name="Khouri H.M."/>
            <person name="Gill J."/>
            <person name="Utterback T.R."/>
            <person name="McDonald L.A."/>
            <person name="Feldblyum T.V."/>
            <person name="Smith H.O."/>
            <person name="Venter J.C."/>
            <person name="Nealson K.H."/>
            <person name="Fraser C.M."/>
        </authorList>
    </citation>
    <scope>NUCLEOTIDE SEQUENCE [LARGE SCALE GENOMIC DNA]</scope>
    <source>
        <strain>ATCC 700550 / JCM 31522 / CIP 106686 / LMG 19005 / NCIMB 14063 / MR-1</strain>
    </source>
</reference>
<feature type="chain" id="PRO_1000014129" description="Ion-translocating oxidoreductase complex subunit G">
    <location>
        <begin position="1"/>
        <end position="212"/>
    </location>
</feature>
<feature type="transmembrane region" description="Helical" evidence="1">
    <location>
        <begin position="9"/>
        <end position="29"/>
    </location>
</feature>
<feature type="modified residue" description="FMN phosphoryl threonine" evidence="1">
    <location>
        <position position="176"/>
    </location>
</feature>
<name>RNFG_SHEON</name>
<sequence length="212" mass="23414">MNNPMIKNGLLLALFALLCTGLVAVVNQQTFDKIKLQQQKELMGILHQLIPEEIHDNELTAQCTLLQNKEALGTEDAMPAYIATAAGKPVAIAMEAIAPDGYNGNIKLIVGINTQGEVLGVRTLAHQETPGLGDKIELRKSDWVTKFVGKVLKSEDDKQWQVQKDGGDFDQFTGATITPRAYVKAVKRAVWYFTQHQAEIFSQPLNCEAKHD</sequence>
<evidence type="ECO:0000255" key="1">
    <source>
        <dbReference type="HAMAP-Rule" id="MF_00479"/>
    </source>
</evidence>